<organism>
    <name type="scientific">Xanthomonas oryzae pv. oryzae (strain KACC10331 / KXO85)</name>
    <dbReference type="NCBI Taxonomy" id="291331"/>
    <lineage>
        <taxon>Bacteria</taxon>
        <taxon>Pseudomonadati</taxon>
        <taxon>Pseudomonadota</taxon>
        <taxon>Gammaproteobacteria</taxon>
        <taxon>Lysobacterales</taxon>
        <taxon>Lysobacteraceae</taxon>
        <taxon>Xanthomonas</taxon>
    </lineage>
</organism>
<feature type="chain" id="PRO_1000012300" description="Lipoyl synthase">
    <location>
        <begin position="1"/>
        <end position="337"/>
    </location>
</feature>
<feature type="domain" description="Radical SAM core" evidence="2">
    <location>
        <begin position="93"/>
        <end position="312"/>
    </location>
</feature>
<feature type="binding site" evidence="1">
    <location>
        <position position="81"/>
    </location>
    <ligand>
        <name>[4Fe-4S] cluster</name>
        <dbReference type="ChEBI" id="CHEBI:49883"/>
        <label>1</label>
    </ligand>
</feature>
<feature type="binding site" evidence="1">
    <location>
        <position position="86"/>
    </location>
    <ligand>
        <name>[4Fe-4S] cluster</name>
        <dbReference type="ChEBI" id="CHEBI:49883"/>
        <label>1</label>
    </ligand>
</feature>
<feature type="binding site" evidence="1">
    <location>
        <position position="92"/>
    </location>
    <ligand>
        <name>[4Fe-4S] cluster</name>
        <dbReference type="ChEBI" id="CHEBI:49883"/>
        <label>1</label>
    </ligand>
</feature>
<feature type="binding site" evidence="1">
    <location>
        <position position="107"/>
    </location>
    <ligand>
        <name>[4Fe-4S] cluster</name>
        <dbReference type="ChEBI" id="CHEBI:49883"/>
        <label>2</label>
        <note>4Fe-4S-S-AdoMet</note>
    </ligand>
</feature>
<feature type="binding site" evidence="1">
    <location>
        <position position="111"/>
    </location>
    <ligand>
        <name>[4Fe-4S] cluster</name>
        <dbReference type="ChEBI" id="CHEBI:49883"/>
        <label>2</label>
        <note>4Fe-4S-S-AdoMet</note>
    </ligand>
</feature>
<feature type="binding site" evidence="1">
    <location>
        <position position="114"/>
    </location>
    <ligand>
        <name>[4Fe-4S] cluster</name>
        <dbReference type="ChEBI" id="CHEBI:49883"/>
        <label>2</label>
        <note>4Fe-4S-S-AdoMet</note>
    </ligand>
</feature>
<feature type="binding site" evidence="1">
    <location>
        <position position="323"/>
    </location>
    <ligand>
        <name>[4Fe-4S] cluster</name>
        <dbReference type="ChEBI" id="CHEBI:49883"/>
        <label>1</label>
    </ligand>
</feature>
<sequence>MTQPTARSIPLQVVSGDTAAPAPLQTGVKQIGGDKIHRSPVQFVDAPVLRKPSWIRVRIPSGNAVQNLKAKLRENRLVTVCEEASCPNIHECFSHGTATFMILGEVCTRRCSFCDVAHGRPKPPDANEPASLAITVADMGLKYVVVTSVDRDDLRDGGAQHFVDCISAIRTSSPNTRIEILTPDFRGKGRMDRALDILALSPPDVFNHNIETVPDLYPNVRPGADYQWSLTLLQRFKAQHPSIATKSGIMLGLGETMEQVQATLRDLRAHDVDMITIGQYLQPTPHHHPVMRYWTPEEYKALEEYGNALGFSHVASGPMVRSSYHADRQAAGAGVAA</sequence>
<proteinExistence type="inferred from homology"/>
<gene>
    <name evidence="1" type="primary">lipA</name>
    <name type="ordered locus">XOO3952</name>
</gene>
<comment type="function">
    <text evidence="1">Catalyzes the radical-mediated insertion of two sulfur atoms into the C-6 and C-8 positions of the octanoyl moiety bound to the lipoyl domains of lipoate-dependent enzymes, thereby converting the octanoylated domains into lipoylated derivatives.</text>
</comment>
<comment type="catalytic activity">
    <reaction evidence="1">
        <text>[[Fe-S] cluster scaffold protein carrying a second [4Fe-4S](2+) cluster] + N(6)-octanoyl-L-lysyl-[protein] + 2 oxidized [2Fe-2S]-[ferredoxin] + 2 S-adenosyl-L-methionine + 4 H(+) = [[Fe-S] cluster scaffold protein] + N(6)-[(R)-dihydrolipoyl]-L-lysyl-[protein] + 4 Fe(3+) + 2 hydrogen sulfide + 2 5'-deoxyadenosine + 2 L-methionine + 2 reduced [2Fe-2S]-[ferredoxin]</text>
        <dbReference type="Rhea" id="RHEA:16585"/>
        <dbReference type="Rhea" id="RHEA-COMP:9928"/>
        <dbReference type="Rhea" id="RHEA-COMP:10000"/>
        <dbReference type="Rhea" id="RHEA-COMP:10001"/>
        <dbReference type="Rhea" id="RHEA-COMP:10475"/>
        <dbReference type="Rhea" id="RHEA-COMP:14568"/>
        <dbReference type="Rhea" id="RHEA-COMP:14569"/>
        <dbReference type="ChEBI" id="CHEBI:15378"/>
        <dbReference type="ChEBI" id="CHEBI:17319"/>
        <dbReference type="ChEBI" id="CHEBI:29034"/>
        <dbReference type="ChEBI" id="CHEBI:29919"/>
        <dbReference type="ChEBI" id="CHEBI:33722"/>
        <dbReference type="ChEBI" id="CHEBI:33737"/>
        <dbReference type="ChEBI" id="CHEBI:33738"/>
        <dbReference type="ChEBI" id="CHEBI:57844"/>
        <dbReference type="ChEBI" id="CHEBI:59789"/>
        <dbReference type="ChEBI" id="CHEBI:78809"/>
        <dbReference type="ChEBI" id="CHEBI:83100"/>
        <dbReference type="EC" id="2.8.1.8"/>
    </reaction>
</comment>
<comment type="cofactor">
    <cofactor evidence="1">
        <name>[4Fe-4S] cluster</name>
        <dbReference type="ChEBI" id="CHEBI:49883"/>
    </cofactor>
    <text evidence="1">Binds 2 [4Fe-4S] clusters per subunit. One cluster is coordinated with 3 cysteines and an exchangeable S-adenosyl-L-methionine.</text>
</comment>
<comment type="pathway">
    <text evidence="1">Protein modification; protein lipoylation via endogenous pathway; protein N(6)-(lipoyl)lysine from octanoyl-[acyl-carrier-protein]: step 2/2.</text>
</comment>
<comment type="subcellular location">
    <subcellularLocation>
        <location evidence="1">Cytoplasm</location>
    </subcellularLocation>
</comment>
<comment type="similarity">
    <text evidence="1">Belongs to the radical SAM superfamily. Lipoyl synthase family.</text>
</comment>
<protein>
    <recommendedName>
        <fullName evidence="1">Lipoyl synthase</fullName>
        <ecNumber evidence="1">2.8.1.8</ecNumber>
    </recommendedName>
    <alternativeName>
        <fullName evidence="1">Lip-syn</fullName>
        <shortName evidence="1">LS</shortName>
    </alternativeName>
    <alternativeName>
        <fullName evidence="1">Lipoate synthase</fullName>
    </alternativeName>
    <alternativeName>
        <fullName evidence="1">Lipoic acid synthase</fullName>
    </alternativeName>
    <alternativeName>
        <fullName evidence="1">Sulfur insertion protein LipA</fullName>
    </alternativeName>
</protein>
<keyword id="KW-0004">4Fe-4S</keyword>
<keyword id="KW-0963">Cytoplasm</keyword>
<keyword id="KW-0408">Iron</keyword>
<keyword id="KW-0411">Iron-sulfur</keyword>
<keyword id="KW-0479">Metal-binding</keyword>
<keyword id="KW-1185">Reference proteome</keyword>
<keyword id="KW-0949">S-adenosyl-L-methionine</keyword>
<keyword id="KW-0808">Transferase</keyword>
<dbReference type="EC" id="2.8.1.8" evidence="1"/>
<dbReference type="EMBL" id="AE013598">
    <property type="protein sequence ID" value="AAW77206.1"/>
    <property type="molecule type" value="Genomic_DNA"/>
</dbReference>
<dbReference type="SMR" id="Q5GVR7"/>
<dbReference type="STRING" id="291331.XOO3952"/>
<dbReference type="KEGG" id="xoo:XOO3952"/>
<dbReference type="PATRIC" id="fig|291331.8.peg.4375"/>
<dbReference type="HOGENOM" id="CLU_033144_2_1_6"/>
<dbReference type="UniPathway" id="UPA00538">
    <property type="reaction ID" value="UER00593"/>
</dbReference>
<dbReference type="Proteomes" id="UP000006735">
    <property type="component" value="Chromosome"/>
</dbReference>
<dbReference type="GO" id="GO:0005737">
    <property type="term" value="C:cytoplasm"/>
    <property type="evidence" value="ECO:0007669"/>
    <property type="project" value="UniProtKB-SubCell"/>
</dbReference>
<dbReference type="GO" id="GO:0051539">
    <property type="term" value="F:4 iron, 4 sulfur cluster binding"/>
    <property type="evidence" value="ECO:0007669"/>
    <property type="project" value="UniProtKB-UniRule"/>
</dbReference>
<dbReference type="GO" id="GO:0016992">
    <property type="term" value="F:lipoate synthase activity"/>
    <property type="evidence" value="ECO:0007669"/>
    <property type="project" value="UniProtKB-UniRule"/>
</dbReference>
<dbReference type="GO" id="GO:0046872">
    <property type="term" value="F:metal ion binding"/>
    <property type="evidence" value="ECO:0007669"/>
    <property type="project" value="UniProtKB-KW"/>
</dbReference>
<dbReference type="CDD" id="cd01335">
    <property type="entry name" value="Radical_SAM"/>
    <property type="match status" value="1"/>
</dbReference>
<dbReference type="FunFam" id="3.20.20.70:FF:000023">
    <property type="entry name" value="Lipoyl synthase"/>
    <property type="match status" value="1"/>
</dbReference>
<dbReference type="Gene3D" id="3.20.20.70">
    <property type="entry name" value="Aldolase class I"/>
    <property type="match status" value="1"/>
</dbReference>
<dbReference type="HAMAP" id="MF_00206">
    <property type="entry name" value="Lipoyl_synth"/>
    <property type="match status" value="1"/>
</dbReference>
<dbReference type="InterPro" id="IPR013785">
    <property type="entry name" value="Aldolase_TIM"/>
</dbReference>
<dbReference type="InterPro" id="IPR006638">
    <property type="entry name" value="Elp3/MiaA/NifB-like_rSAM"/>
</dbReference>
<dbReference type="InterPro" id="IPR031691">
    <property type="entry name" value="LIAS_N"/>
</dbReference>
<dbReference type="InterPro" id="IPR003698">
    <property type="entry name" value="Lipoyl_synth"/>
</dbReference>
<dbReference type="InterPro" id="IPR007197">
    <property type="entry name" value="rSAM"/>
</dbReference>
<dbReference type="NCBIfam" id="TIGR00510">
    <property type="entry name" value="lipA"/>
    <property type="match status" value="1"/>
</dbReference>
<dbReference type="NCBIfam" id="NF004019">
    <property type="entry name" value="PRK05481.1"/>
    <property type="match status" value="1"/>
</dbReference>
<dbReference type="NCBIfam" id="NF009544">
    <property type="entry name" value="PRK12928.1"/>
    <property type="match status" value="1"/>
</dbReference>
<dbReference type="PANTHER" id="PTHR10949">
    <property type="entry name" value="LIPOYL SYNTHASE"/>
    <property type="match status" value="1"/>
</dbReference>
<dbReference type="PANTHER" id="PTHR10949:SF0">
    <property type="entry name" value="LIPOYL SYNTHASE, MITOCHONDRIAL"/>
    <property type="match status" value="1"/>
</dbReference>
<dbReference type="Pfam" id="PF16881">
    <property type="entry name" value="LIAS_N"/>
    <property type="match status" value="1"/>
</dbReference>
<dbReference type="Pfam" id="PF04055">
    <property type="entry name" value="Radical_SAM"/>
    <property type="match status" value="1"/>
</dbReference>
<dbReference type="PIRSF" id="PIRSF005963">
    <property type="entry name" value="Lipoyl_synth"/>
    <property type="match status" value="1"/>
</dbReference>
<dbReference type="SFLD" id="SFLDF00271">
    <property type="entry name" value="lipoyl_synthase"/>
    <property type="match status" value="1"/>
</dbReference>
<dbReference type="SFLD" id="SFLDG01058">
    <property type="entry name" value="lipoyl_synthase_like"/>
    <property type="match status" value="1"/>
</dbReference>
<dbReference type="SMART" id="SM00729">
    <property type="entry name" value="Elp3"/>
    <property type="match status" value="1"/>
</dbReference>
<dbReference type="SUPFAM" id="SSF102114">
    <property type="entry name" value="Radical SAM enzymes"/>
    <property type="match status" value="1"/>
</dbReference>
<dbReference type="PROSITE" id="PS51918">
    <property type="entry name" value="RADICAL_SAM"/>
    <property type="match status" value="1"/>
</dbReference>
<accession>Q5GVR7</accession>
<name>LIPA_XANOR</name>
<reference key="1">
    <citation type="journal article" date="2005" name="Nucleic Acids Res.">
        <title>The genome sequence of Xanthomonas oryzae pathovar oryzae KACC10331, the bacterial blight pathogen of rice.</title>
        <authorList>
            <person name="Lee B.-M."/>
            <person name="Park Y.-J."/>
            <person name="Park D.-S."/>
            <person name="Kang H.-W."/>
            <person name="Kim J.-G."/>
            <person name="Song E.-S."/>
            <person name="Park I.-C."/>
            <person name="Yoon U.-H."/>
            <person name="Hahn J.-H."/>
            <person name="Koo B.-S."/>
            <person name="Lee G.-B."/>
            <person name="Kim H."/>
            <person name="Park H.-S."/>
            <person name="Yoon K.-O."/>
            <person name="Kim J.-H."/>
            <person name="Jung C.-H."/>
            <person name="Koh N.-H."/>
            <person name="Seo J.-S."/>
            <person name="Go S.-J."/>
        </authorList>
    </citation>
    <scope>NUCLEOTIDE SEQUENCE [LARGE SCALE GENOMIC DNA]</scope>
    <source>
        <strain>KACC10331 / KXO85</strain>
    </source>
</reference>
<evidence type="ECO:0000255" key="1">
    <source>
        <dbReference type="HAMAP-Rule" id="MF_00206"/>
    </source>
</evidence>
<evidence type="ECO:0000255" key="2">
    <source>
        <dbReference type="PROSITE-ProRule" id="PRU01266"/>
    </source>
</evidence>